<evidence type="ECO:0000255" key="1">
    <source>
        <dbReference type="HAMAP-Rule" id="MF_00049"/>
    </source>
</evidence>
<feature type="chain" id="PRO_0000152060" description="Leucine--tRNA ligase">
    <location>
        <begin position="1"/>
        <end position="860"/>
    </location>
</feature>
<feature type="short sequence motif" description="'HIGH' region">
    <location>
        <begin position="42"/>
        <end position="52"/>
    </location>
</feature>
<feature type="short sequence motif" description="'KMSKS' region">
    <location>
        <begin position="619"/>
        <end position="623"/>
    </location>
</feature>
<feature type="binding site" evidence="1">
    <location>
        <position position="622"/>
    </location>
    <ligand>
        <name>ATP</name>
        <dbReference type="ChEBI" id="CHEBI:30616"/>
    </ligand>
</feature>
<comment type="catalytic activity">
    <reaction evidence="1">
        <text>tRNA(Leu) + L-leucine + ATP = L-leucyl-tRNA(Leu) + AMP + diphosphate</text>
        <dbReference type="Rhea" id="RHEA:11688"/>
        <dbReference type="Rhea" id="RHEA-COMP:9613"/>
        <dbReference type="Rhea" id="RHEA-COMP:9622"/>
        <dbReference type="ChEBI" id="CHEBI:30616"/>
        <dbReference type="ChEBI" id="CHEBI:33019"/>
        <dbReference type="ChEBI" id="CHEBI:57427"/>
        <dbReference type="ChEBI" id="CHEBI:78442"/>
        <dbReference type="ChEBI" id="CHEBI:78494"/>
        <dbReference type="ChEBI" id="CHEBI:456215"/>
        <dbReference type="EC" id="6.1.1.4"/>
    </reaction>
</comment>
<comment type="subcellular location">
    <subcellularLocation>
        <location evidence="1">Cytoplasm</location>
    </subcellularLocation>
</comment>
<comment type="similarity">
    <text evidence="1">Belongs to the class-I aminoacyl-tRNA synthetase family.</text>
</comment>
<proteinExistence type="inferred from homology"/>
<accession>Q7N755</accession>
<reference key="1">
    <citation type="journal article" date="2003" name="Nat. Biotechnol.">
        <title>The genome sequence of the entomopathogenic bacterium Photorhabdus luminescens.</title>
        <authorList>
            <person name="Duchaud E."/>
            <person name="Rusniok C."/>
            <person name="Frangeul L."/>
            <person name="Buchrieser C."/>
            <person name="Givaudan A."/>
            <person name="Taourit S."/>
            <person name="Bocs S."/>
            <person name="Boursaux-Eude C."/>
            <person name="Chandler M."/>
            <person name="Charles J.-F."/>
            <person name="Dassa E."/>
            <person name="Derose R."/>
            <person name="Derzelle S."/>
            <person name="Freyssinet G."/>
            <person name="Gaudriault S."/>
            <person name="Medigue C."/>
            <person name="Lanois A."/>
            <person name="Powell K."/>
            <person name="Siguier P."/>
            <person name="Vincent R."/>
            <person name="Wingate V."/>
            <person name="Zouine M."/>
            <person name="Glaser P."/>
            <person name="Boemare N."/>
            <person name="Danchin A."/>
            <person name="Kunst F."/>
        </authorList>
    </citation>
    <scope>NUCLEOTIDE SEQUENCE [LARGE SCALE GENOMIC DNA]</scope>
    <source>
        <strain>DSM 15139 / CIP 105565 / TT01</strain>
    </source>
</reference>
<keyword id="KW-0030">Aminoacyl-tRNA synthetase</keyword>
<keyword id="KW-0067">ATP-binding</keyword>
<keyword id="KW-0963">Cytoplasm</keyword>
<keyword id="KW-0436">Ligase</keyword>
<keyword id="KW-0547">Nucleotide-binding</keyword>
<keyword id="KW-0648">Protein biosynthesis</keyword>
<keyword id="KW-1185">Reference proteome</keyword>
<name>SYL_PHOLL</name>
<sequence length="860" mass="97477">MQEQYRPEDIEPQVQLHWQEKQTFKVTEDNSKEKYYCLSMLPYPSGRLHMGHVRNYTIGDVISRYQRMLGKNVLQPIGWDAFGLPAEGAAVKNNTAPAPWTYANIEYMKGQLKTLGFGYDWDREVTTCTPEYYHWEQWFFTKLYEKGLVYKKTSSVNWCPHDLTVLANEQVVDGCCWRCDSKVERKEIPQWFIKITDYAEELLSDLETLEEWPEQVKTMQRNWIGRSEGVEITFDVADSQEKLTVYTTRPDTFLGATYVAIAAGHPLAKQAAENNPELVAFIDECRNTKVAEADMATMEKKGMATGMFAIHSLTKEKVAIWVANFVLMEYGTGAVMAVPGHDQRDWEFATKYNLPIKAVILDNEGNEPNVHEAPVTDKNILFNSGEFSGLNHEAGFNAIANKLVEMGVGKRKVNYRLRDWGVSRQRYWGAPIPMATLENGTVVPVPADQLPVILPEDVKMDGITSPIKADPEWAKTTINGQPALRETDTFDTFMESSWYYARYTCPDYDKGLLDPAAANYWLPVDQYIGGIEHAIMHLMYFRFFHKLMRDASLVNSNEPAKRLLCQGMVLADAFYYIGKNGEKIWVSPADTIVERDDKGRIVKATDKEGHELVYTGMSKMSKSKNNGIDPQLMVEKYGADTVRLFMMFAAPPELTLEWQESSVEGANRFLKRVWRLVYEHSSKGATQPLDITNLTVEQKDLFRDLHKTIAKVTDDVGRRQAFNTAIAAVMELMNKLTRAPQETEQDRALMQEALLAVVRMLSPITPHACFIMWQALGGEGGIDTADWPQANEQAMVDDTKLVVIQVNGKVRGRVTVPADATKEYVHDLAAQEYGVAKYLEGVTIRKVIYVPGKLLNLVVG</sequence>
<organism>
    <name type="scientific">Photorhabdus laumondii subsp. laumondii (strain DSM 15139 / CIP 105565 / TT01)</name>
    <name type="common">Photorhabdus luminescens subsp. laumondii</name>
    <dbReference type="NCBI Taxonomy" id="243265"/>
    <lineage>
        <taxon>Bacteria</taxon>
        <taxon>Pseudomonadati</taxon>
        <taxon>Pseudomonadota</taxon>
        <taxon>Gammaproteobacteria</taxon>
        <taxon>Enterobacterales</taxon>
        <taxon>Morganellaceae</taxon>
        <taxon>Photorhabdus</taxon>
    </lineage>
</organism>
<gene>
    <name evidence="1" type="primary">leuS</name>
    <name type="ordered locus">plu1303</name>
</gene>
<dbReference type="EC" id="6.1.1.4" evidence="1"/>
<dbReference type="EMBL" id="BX571863">
    <property type="protein sequence ID" value="CAE13597.1"/>
    <property type="molecule type" value="Genomic_DNA"/>
</dbReference>
<dbReference type="RefSeq" id="WP_011145627.1">
    <property type="nucleotide sequence ID" value="NC_005126.1"/>
</dbReference>
<dbReference type="SMR" id="Q7N755"/>
<dbReference type="STRING" id="243265.plu1303"/>
<dbReference type="GeneID" id="48847581"/>
<dbReference type="KEGG" id="plu:plu1303"/>
<dbReference type="eggNOG" id="COG0495">
    <property type="taxonomic scope" value="Bacteria"/>
</dbReference>
<dbReference type="HOGENOM" id="CLU_004427_0_0_6"/>
<dbReference type="OrthoDB" id="9810365at2"/>
<dbReference type="Proteomes" id="UP000002514">
    <property type="component" value="Chromosome"/>
</dbReference>
<dbReference type="GO" id="GO:0005829">
    <property type="term" value="C:cytosol"/>
    <property type="evidence" value="ECO:0007669"/>
    <property type="project" value="TreeGrafter"/>
</dbReference>
<dbReference type="GO" id="GO:0002161">
    <property type="term" value="F:aminoacyl-tRNA deacylase activity"/>
    <property type="evidence" value="ECO:0007669"/>
    <property type="project" value="InterPro"/>
</dbReference>
<dbReference type="GO" id="GO:0005524">
    <property type="term" value="F:ATP binding"/>
    <property type="evidence" value="ECO:0007669"/>
    <property type="project" value="UniProtKB-UniRule"/>
</dbReference>
<dbReference type="GO" id="GO:0004823">
    <property type="term" value="F:leucine-tRNA ligase activity"/>
    <property type="evidence" value="ECO:0007669"/>
    <property type="project" value="UniProtKB-UniRule"/>
</dbReference>
<dbReference type="GO" id="GO:0006429">
    <property type="term" value="P:leucyl-tRNA aminoacylation"/>
    <property type="evidence" value="ECO:0007669"/>
    <property type="project" value="UniProtKB-UniRule"/>
</dbReference>
<dbReference type="CDD" id="cd07958">
    <property type="entry name" value="Anticodon_Ia_Leu_BEm"/>
    <property type="match status" value="1"/>
</dbReference>
<dbReference type="CDD" id="cd00812">
    <property type="entry name" value="LeuRS_core"/>
    <property type="match status" value="1"/>
</dbReference>
<dbReference type="FunFam" id="1.10.730.10:FF:000002">
    <property type="entry name" value="Leucine--tRNA ligase"/>
    <property type="match status" value="2"/>
</dbReference>
<dbReference type="FunFam" id="2.20.28.290:FF:000001">
    <property type="entry name" value="Leucine--tRNA ligase"/>
    <property type="match status" value="1"/>
</dbReference>
<dbReference type="FunFam" id="3.10.20.590:FF:000001">
    <property type="entry name" value="Leucine--tRNA ligase"/>
    <property type="match status" value="1"/>
</dbReference>
<dbReference type="FunFam" id="3.40.50.620:FF:000003">
    <property type="entry name" value="Leucine--tRNA ligase"/>
    <property type="match status" value="1"/>
</dbReference>
<dbReference type="FunFam" id="3.40.50.620:FF:000124">
    <property type="entry name" value="Leucine--tRNA ligase"/>
    <property type="match status" value="1"/>
</dbReference>
<dbReference type="FunFam" id="3.90.740.10:FF:000012">
    <property type="entry name" value="Leucine--tRNA ligase"/>
    <property type="match status" value="1"/>
</dbReference>
<dbReference type="Gene3D" id="2.20.28.290">
    <property type="match status" value="1"/>
</dbReference>
<dbReference type="Gene3D" id="3.10.20.590">
    <property type="match status" value="1"/>
</dbReference>
<dbReference type="Gene3D" id="3.40.50.620">
    <property type="entry name" value="HUPs"/>
    <property type="match status" value="2"/>
</dbReference>
<dbReference type="Gene3D" id="1.10.730.10">
    <property type="entry name" value="Isoleucyl-tRNA Synthetase, Domain 1"/>
    <property type="match status" value="1"/>
</dbReference>
<dbReference type="Gene3D" id="3.90.740.10">
    <property type="entry name" value="Valyl/Leucyl/Isoleucyl-tRNA synthetase, editing domain"/>
    <property type="match status" value="1"/>
</dbReference>
<dbReference type="HAMAP" id="MF_00049_B">
    <property type="entry name" value="Leu_tRNA_synth_B"/>
    <property type="match status" value="1"/>
</dbReference>
<dbReference type="InterPro" id="IPR001412">
    <property type="entry name" value="aa-tRNA-synth_I_CS"/>
</dbReference>
<dbReference type="InterPro" id="IPR002300">
    <property type="entry name" value="aa-tRNA-synth_Ia"/>
</dbReference>
<dbReference type="InterPro" id="IPR002302">
    <property type="entry name" value="Leu-tRNA-ligase"/>
</dbReference>
<dbReference type="InterPro" id="IPR025709">
    <property type="entry name" value="Leu_tRNA-synth_edit"/>
</dbReference>
<dbReference type="InterPro" id="IPR013155">
    <property type="entry name" value="M/V/L/I-tRNA-synth_anticd-bd"/>
</dbReference>
<dbReference type="InterPro" id="IPR015413">
    <property type="entry name" value="Methionyl/Leucyl_tRNA_Synth"/>
</dbReference>
<dbReference type="InterPro" id="IPR014729">
    <property type="entry name" value="Rossmann-like_a/b/a_fold"/>
</dbReference>
<dbReference type="InterPro" id="IPR009080">
    <property type="entry name" value="tRNAsynth_Ia_anticodon-bd"/>
</dbReference>
<dbReference type="InterPro" id="IPR009008">
    <property type="entry name" value="Val/Leu/Ile-tRNA-synth_edit"/>
</dbReference>
<dbReference type="NCBIfam" id="TIGR00396">
    <property type="entry name" value="leuS_bact"/>
    <property type="match status" value="1"/>
</dbReference>
<dbReference type="PANTHER" id="PTHR43740:SF2">
    <property type="entry name" value="LEUCINE--TRNA LIGASE, MITOCHONDRIAL"/>
    <property type="match status" value="1"/>
</dbReference>
<dbReference type="PANTHER" id="PTHR43740">
    <property type="entry name" value="LEUCYL-TRNA SYNTHETASE"/>
    <property type="match status" value="1"/>
</dbReference>
<dbReference type="Pfam" id="PF08264">
    <property type="entry name" value="Anticodon_1"/>
    <property type="match status" value="1"/>
</dbReference>
<dbReference type="Pfam" id="PF00133">
    <property type="entry name" value="tRNA-synt_1"/>
    <property type="match status" value="2"/>
</dbReference>
<dbReference type="Pfam" id="PF13603">
    <property type="entry name" value="tRNA-synt_1_2"/>
    <property type="match status" value="1"/>
</dbReference>
<dbReference type="Pfam" id="PF09334">
    <property type="entry name" value="tRNA-synt_1g"/>
    <property type="match status" value="1"/>
</dbReference>
<dbReference type="PRINTS" id="PR00985">
    <property type="entry name" value="TRNASYNTHLEU"/>
</dbReference>
<dbReference type="SUPFAM" id="SSF47323">
    <property type="entry name" value="Anticodon-binding domain of a subclass of class I aminoacyl-tRNA synthetases"/>
    <property type="match status" value="1"/>
</dbReference>
<dbReference type="SUPFAM" id="SSF52374">
    <property type="entry name" value="Nucleotidylyl transferase"/>
    <property type="match status" value="1"/>
</dbReference>
<dbReference type="SUPFAM" id="SSF50677">
    <property type="entry name" value="ValRS/IleRS/LeuRS editing domain"/>
    <property type="match status" value="1"/>
</dbReference>
<dbReference type="PROSITE" id="PS00178">
    <property type="entry name" value="AA_TRNA_LIGASE_I"/>
    <property type="match status" value="1"/>
</dbReference>
<protein>
    <recommendedName>
        <fullName evidence="1">Leucine--tRNA ligase</fullName>
        <ecNumber evidence="1">6.1.1.4</ecNumber>
    </recommendedName>
    <alternativeName>
        <fullName evidence="1">Leucyl-tRNA synthetase</fullName>
        <shortName evidence="1">LeuRS</shortName>
    </alternativeName>
</protein>